<name>MYOD_DICDI</name>
<protein>
    <recommendedName>
        <fullName>Myosin ID heavy chain</fullName>
    </recommendedName>
</protein>
<comment type="function">
    <text evidence="6">Myosin is a protein that binds to actin and has ATPase activity that is activated by actin. Myosin id may have a role in chemotaxis and aggregation; it could serve to stabilize and even retract cortical structures, such as pseudopods and lamellopods. Involved in the process of phagocytosis.</text>
</comment>
<comment type="subunit">
    <text>Myosin I heavy chain is single-headed. Dimer of a heavy and a light chain. Inability to self-assemble into filaments.</text>
</comment>
<comment type="subcellular location">
    <subcellularLocation>
        <location>Cell projection</location>
        <location>Pseudopodium</location>
    </subcellularLocation>
    <subcellularLocation>
        <location>Cytoplasm</location>
        <location>Cell cortex</location>
    </subcellularLocation>
    <text>Highest concentration just beneath the plasma membrane in the anterior pseudopod at the leading edge of the cell.</text>
</comment>
<comment type="developmental stage">
    <text evidence="7">Found at leading edges of lamellipodia and at sites of cell-cell contact in stationary stage cells. Also present in filopodia. Largely disappears from lamellipodia and cell-cell contact regions in aggregation stage cells, suggesting the occurrence of a developmentally regulated relocalization to the cytoplasm.</text>
</comment>
<comment type="domain">
    <text>Myosin tail domain binds directly to anionic phospholipid membranes; myosins I could therefore move actin relative to membranes and vice versa. TH.2 and SH3 bind tightly to F-actin; this together with the nucleotide-sensitive site in the head, allows single molecules of myosin I to cross-link actin filaments.</text>
</comment>
<comment type="disruption phenotype">
    <text evidence="6">MyoB and myoD double mutant exhibits reduction in the speed of whole cell translocation. myoB, myoC and myoD triple mutant exhibits reduction in the speed of whole cell translocation.</text>
</comment>
<comment type="similarity">
    <text evidence="8">Belongs to the TRAFAC class myosin-kinesin ATPase superfamily. Myosin family.</text>
</comment>
<proteinExistence type="evidence at protein level"/>
<feature type="chain" id="PRO_0000123368" description="Myosin ID heavy chain">
    <location>
        <begin position="1"/>
        <end position="1109"/>
    </location>
</feature>
<feature type="domain" description="Myosin motor" evidence="3">
    <location>
        <begin position="7"/>
        <end position="687"/>
    </location>
</feature>
<feature type="domain" description="TH1" evidence="4">
    <location>
        <begin position="725"/>
        <end position="919"/>
    </location>
</feature>
<feature type="domain" description="SH3" evidence="2">
    <location>
        <begin position="958"/>
        <end position="1017"/>
    </location>
</feature>
<feature type="region of interest" description="Actin-binding" evidence="3">
    <location>
        <begin position="564"/>
        <end position="586"/>
    </location>
</feature>
<feature type="region of interest" description="Disordered" evidence="5">
    <location>
        <begin position="1017"/>
        <end position="1109"/>
    </location>
</feature>
<feature type="compositionally biased region" description="Low complexity" evidence="5">
    <location>
        <begin position="1030"/>
        <end position="1043"/>
    </location>
</feature>
<feature type="binding site" evidence="1">
    <location>
        <begin position="101"/>
        <end position="108"/>
    </location>
    <ligand>
        <name>ATP</name>
        <dbReference type="ChEBI" id="CHEBI:30616"/>
    </ligand>
</feature>
<feature type="sequence conflict" description="In Ref. 1; L16509." evidence="8" ref="1">
    <original>I</original>
    <variation>IFGRI</variation>
    <location>
        <position position="613"/>
    </location>
</feature>
<feature type="sequence conflict" description="In Ref. 1; L16509." evidence="8" ref="1">
    <original>A</original>
    <variation>R</variation>
    <location>
        <position position="694"/>
    </location>
</feature>
<feature type="sequence conflict" description="In Ref. 1; L16509." evidence="8" ref="1">
    <original>T</original>
    <variation>R</variation>
    <location>
        <position position="837"/>
    </location>
</feature>
<keyword id="KW-0009">Actin-binding</keyword>
<keyword id="KW-0067">ATP-binding</keyword>
<keyword id="KW-0966">Cell projection</keyword>
<keyword id="KW-0145">Chemotaxis</keyword>
<keyword id="KW-0963">Cytoplasm</keyword>
<keyword id="KW-0903">Direct protein sequencing</keyword>
<keyword id="KW-0505">Motor protein</keyword>
<keyword id="KW-0518">Myosin</keyword>
<keyword id="KW-0547">Nucleotide-binding</keyword>
<keyword id="KW-0581">Phagocytosis</keyword>
<keyword id="KW-1185">Reference proteome</keyword>
<keyword id="KW-0728">SH3 domain</keyword>
<accession>P34109</accession>
<accession>Q553G7</accession>
<accession>Q869M0</accession>
<organism>
    <name type="scientific">Dictyostelium discoideum</name>
    <name type="common">Social amoeba</name>
    <dbReference type="NCBI Taxonomy" id="44689"/>
    <lineage>
        <taxon>Eukaryota</taxon>
        <taxon>Amoebozoa</taxon>
        <taxon>Evosea</taxon>
        <taxon>Eumycetozoa</taxon>
        <taxon>Dictyostelia</taxon>
        <taxon>Dictyosteliales</taxon>
        <taxon>Dictyosteliaceae</taxon>
        <taxon>Dictyostelium</taxon>
    </lineage>
</organism>
<dbReference type="EMBL" id="L16509">
    <property type="status" value="NOT_ANNOTATED_CDS"/>
    <property type="molecule type" value="mRNA"/>
</dbReference>
<dbReference type="EMBL" id="AAFI02000013">
    <property type="protein sequence ID" value="EAL69474.1"/>
    <property type="molecule type" value="Genomic_DNA"/>
</dbReference>
<dbReference type="PIR" id="A47106">
    <property type="entry name" value="A47106"/>
</dbReference>
<dbReference type="RefSeq" id="XP_643446.1">
    <property type="nucleotide sequence ID" value="XM_638354.1"/>
</dbReference>
<dbReference type="SMR" id="P34109"/>
<dbReference type="FunCoup" id="P34109">
    <property type="interactions" value="6"/>
</dbReference>
<dbReference type="STRING" id="44689.P34109"/>
<dbReference type="PaxDb" id="44689-DDB0191347"/>
<dbReference type="EnsemblProtists" id="EAL69474">
    <property type="protein sequence ID" value="EAL69474"/>
    <property type="gene ID" value="DDB_G0275447"/>
</dbReference>
<dbReference type="GeneID" id="8620031"/>
<dbReference type="KEGG" id="ddi:DDB_G0275447"/>
<dbReference type="dictyBase" id="DDB_G0275447">
    <property type="gene designation" value="myoD"/>
</dbReference>
<dbReference type="VEuPathDB" id="AmoebaDB:DDB_G0275447"/>
<dbReference type="eggNOG" id="KOG0162">
    <property type="taxonomic scope" value="Eukaryota"/>
</dbReference>
<dbReference type="eggNOG" id="KOG4225">
    <property type="taxonomic scope" value="Eukaryota"/>
</dbReference>
<dbReference type="HOGENOM" id="CLU_000192_7_6_1"/>
<dbReference type="InParanoid" id="P34109"/>
<dbReference type="OMA" id="PPEEYQM"/>
<dbReference type="PhylomeDB" id="P34109"/>
<dbReference type="PRO" id="PR:P34109"/>
<dbReference type="Proteomes" id="UP000002195">
    <property type="component" value="Chromosome 2"/>
</dbReference>
<dbReference type="GO" id="GO:0015629">
    <property type="term" value="C:actin cytoskeleton"/>
    <property type="evidence" value="ECO:0000318"/>
    <property type="project" value="GO_Central"/>
</dbReference>
<dbReference type="GO" id="GO:0062201">
    <property type="term" value="C:actin wave"/>
    <property type="evidence" value="ECO:0000314"/>
    <property type="project" value="dictyBase"/>
</dbReference>
<dbReference type="GO" id="GO:0031252">
    <property type="term" value="C:cell leading edge"/>
    <property type="evidence" value="ECO:0000314"/>
    <property type="project" value="dictyBase"/>
</dbReference>
<dbReference type="GO" id="GO:0005911">
    <property type="term" value="C:cell-cell junction"/>
    <property type="evidence" value="ECO:0000314"/>
    <property type="project" value="dictyBase"/>
</dbReference>
<dbReference type="GO" id="GO:0005737">
    <property type="term" value="C:cytoplasm"/>
    <property type="evidence" value="ECO:0000318"/>
    <property type="project" value="GO_Central"/>
</dbReference>
<dbReference type="GO" id="GO:0005829">
    <property type="term" value="C:cytosol"/>
    <property type="evidence" value="ECO:0000314"/>
    <property type="project" value="dictyBase"/>
</dbReference>
<dbReference type="GO" id="GO:0030175">
    <property type="term" value="C:filopodium"/>
    <property type="evidence" value="ECO:0000314"/>
    <property type="project" value="dictyBase"/>
</dbReference>
<dbReference type="GO" id="GO:0061851">
    <property type="term" value="C:leading edge of lamellipodium"/>
    <property type="evidence" value="ECO:0000314"/>
    <property type="project" value="dictyBase"/>
</dbReference>
<dbReference type="GO" id="GO:0070687">
    <property type="term" value="C:macropinocytic cup cytoskeleton"/>
    <property type="evidence" value="ECO:0000314"/>
    <property type="project" value="dictyBase"/>
</dbReference>
<dbReference type="GO" id="GO:0045160">
    <property type="term" value="C:myosin I complex"/>
    <property type="evidence" value="ECO:0000314"/>
    <property type="project" value="dictyBase"/>
</dbReference>
<dbReference type="GO" id="GO:0005886">
    <property type="term" value="C:plasma membrane"/>
    <property type="evidence" value="ECO:0000314"/>
    <property type="project" value="dictyBase"/>
</dbReference>
<dbReference type="GO" id="GO:0031143">
    <property type="term" value="C:pseudopodium"/>
    <property type="evidence" value="ECO:0007669"/>
    <property type="project" value="UniProtKB-SubCell"/>
</dbReference>
<dbReference type="GO" id="GO:0051233">
    <property type="term" value="C:spindle midzone"/>
    <property type="evidence" value="ECO:0000314"/>
    <property type="project" value="dictyBase"/>
</dbReference>
<dbReference type="GO" id="GO:0051015">
    <property type="term" value="F:actin filament binding"/>
    <property type="evidence" value="ECO:0000314"/>
    <property type="project" value="dictyBase"/>
</dbReference>
<dbReference type="GO" id="GO:0005524">
    <property type="term" value="F:ATP binding"/>
    <property type="evidence" value="ECO:0007669"/>
    <property type="project" value="UniProtKB-KW"/>
</dbReference>
<dbReference type="GO" id="GO:0000146">
    <property type="term" value="F:microfilament motor activity"/>
    <property type="evidence" value="ECO:0000314"/>
    <property type="project" value="dictyBase"/>
</dbReference>
<dbReference type="GO" id="GO:0032027">
    <property type="term" value="F:myosin light chain binding"/>
    <property type="evidence" value="ECO:0000353"/>
    <property type="project" value="dictyBase"/>
</dbReference>
<dbReference type="GO" id="GO:0005547">
    <property type="term" value="F:phosphatidylinositol-3,4,5-trisphosphate binding"/>
    <property type="evidence" value="ECO:0000314"/>
    <property type="project" value="dictyBase"/>
</dbReference>
<dbReference type="GO" id="GO:0005543">
    <property type="term" value="F:phospholipid binding"/>
    <property type="evidence" value="ECO:0000314"/>
    <property type="project" value="dictyBase"/>
</dbReference>
<dbReference type="GO" id="GO:0007015">
    <property type="term" value="P:actin filament organization"/>
    <property type="evidence" value="ECO:0000318"/>
    <property type="project" value="GO_Central"/>
</dbReference>
<dbReference type="GO" id="GO:0030041">
    <property type="term" value="P:actin filament polymerization"/>
    <property type="evidence" value="ECO:0000316"/>
    <property type="project" value="dictyBase"/>
</dbReference>
<dbReference type="GO" id="GO:0043327">
    <property type="term" value="P:chemotaxis to cAMP"/>
    <property type="evidence" value="ECO:0000316"/>
    <property type="project" value="dictyBase"/>
</dbReference>
<dbReference type="GO" id="GO:0006897">
    <property type="term" value="P:endocytosis"/>
    <property type="evidence" value="ECO:0000318"/>
    <property type="project" value="GO_Central"/>
</dbReference>
<dbReference type="GO" id="GO:0006911">
    <property type="term" value="P:phagocytosis, engulfment"/>
    <property type="evidence" value="ECO:0000316"/>
    <property type="project" value="dictyBase"/>
</dbReference>
<dbReference type="CDD" id="cd01378">
    <property type="entry name" value="MYSc_Myo1"/>
    <property type="match status" value="1"/>
</dbReference>
<dbReference type="FunFam" id="1.10.10.820:FF:000001">
    <property type="entry name" value="Myosin heavy chain"/>
    <property type="match status" value="1"/>
</dbReference>
<dbReference type="FunFam" id="1.20.58.530:FF:000007">
    <property type="entry name" value="Myosin IE"/>
    <property type="match status" value="1"/>
</dbReference>
<dbReference type="FunFam" id="2.30.30.40:FF:000072">
    <property type="entry name" value="Unconventional Myosin IB"/>
    <property type="match status" value="1"/>
</dbReference>
<dbReference type="Gene3D" id="1.10.10.820">
    <property type="match status" value="1"/>
</dbReference>
<dbReference type="Gene3D" id="1.20.5.4820">
    <property type="match status" value="1"/>
</dbReference>
<dbReference type="Gene3D" id="1.20.58.530">
    <property type="match status" value="1"/>
</dbReference>
<dbReference type="Gene3D" id="3.40.850.10">
    <property type="entry name" value="Kinesin motor domain"/>
    <property type="match status" value="1"/>
</dbReference>
<dbReference type="Gene3D" id="1.20.120.720">
    <property type="entry name" value="Myosin VI head, motor domain, U50 subdomain"/>
    <property type="match status" value="1"/>
</dbReference>
<dbReference type="Gene3D" id="2.30.30.40">
    <property type="entry name" value="SH3 Domains"/>
    <property type="match status" value="1"/>
</dbReference>
<dbReference type="InterPro" id="IPR036961">
    <property type="entry name" value="Kinesin_motor_dom_sf"/>
</dbReference>
<dbReference type="InterPro" id="IPR001609">
    <property type="entry name" value="Myosin_head_motor_dom-like"/>
</dbReference>
<dbReference type="InterPro" id="IPR010926">
    <property type="entry name" value="Myosin_TH1"/>
</dbReference>
<dbReference type="InterPro" id="IPR036072">
    <property type="entry name" value="MYSc_Myo1"/>
</dbReference>
<dbReference type="InterPro" id="IPR027417">
    <property type="entry name" value="P-loop_NTPase"/>
</dbReference>
<dbReference type="InterPro" id="IPR036028">
    <property type="entry name" value="SH3-like_dom_sf"/>
</dbReference>
<dbReference type="InterPro" id="IPR001452">
    <property type="entry name" value="SH3_domain"/>
</dbReference>
<dbReference type="PANTHER" id="PTHR13140">
    <property type="entry name" value="MYOSIN"/>
    <property type="match status" value="1"/>
</dbReference>
<dbReference type="PANTHER" id="PTHR13140:SF513">
    <property type="entry name" value="MYOSIN ID HEAVY CHAIN"/>
    <property type="match status" value="1"/>
</dbReference>
<dbReference type="Pfam" id="PF00063">
    <property type="entry name" value="Myosin_head"/>
    <property type="match status" value="1"/>
</dbReference>
<dbReference type="Pfam" id="PF06017">
    <property type="entry name" value="Myosin_TH1"/>
    <property type="match status" value="1"/>
</dbReference>
<dbReference type="Pfam" id="PF00018">
    <property type="entry name" value="SH3_1"/>
    <property type="match status" value="1"/>
</dbReference>
<dbReference type="PRINTS" id="PR00193">
    <property type="entry name" value="MYOSINHEAVY"/>
</dbReference>
<dbReference type="PRINTS" id="PR00452">
    <property type="entry name" value="SH3DOMAIN"/>
</dbReference>
<dbReference type="SMART" id="SM00242">
    <property type="entry name" value="MYSc"/>
    <property type="match status" value="1"/>
</dbReference>
<dbReference type="SMART" id="SM00326">
    <property type="entry name" value="SH3"/>
    <property type="match status" value="1"/>
</dbReference>
<dbReference type="SUPFAM" id="SSF52540">
    <property type="entry name" value="P-loop containing nucleoside triphosphate hydrolases"/>
    <property type="match status" value="1"/>
</dbReference>
<dbReference type="SUPFAM" id="SSF50044">
    <property type="entry name" value="SH3-domain"/>
    <property type="match status" value="1"/>
</dbReference>
<dbReference type="PROSITE" id="PS51456">
    <property type="entry name" value="MYOSIN_MOTOR"/>
    <property type="match status" value="1"/>
</dbReference>
<dbReference type="PROSITE" id="PS50002">
    <property type="entry name" value="SH3"/>
    <property type="match status" value="1"/>
</dbReference>
<dbReference type="PROSITE" id="PS51757">
    <property type="entry name" value="TH1"/>
    <property type="match status" value="1"/>
</dbReference>
<reference key="1">
    <citation type="journal article" date="1993" name="J. Biol. Chem.">
        <title>Sequence, expression pattern, intracellular localization, and targeted disruption of the Dictyostelium myosin ID heavy chain isoform.</title>
        <authorList>
            <person name="Jung G."/>
            <person name="Fukui Y."/>
            <person name="Martin B."/>
            <person name="Hammer J.A. III"/>
        </authorList>
    </citation>
    <scope>NUCLEOTIDE SEQUENCE [MRNA]</scope>
    <scope>PROTEIN SEQUENCE OF 604-610; 733-742 AND 914-928</scope>
    <scope>SUBCELLULAR LOCATION</scope>
    <source>
        <strain>AX3</strain>
    </source>
</reference>
<reference key="2">
    <citation type="journal article" date="2002" name="Nature">
        <title>Sequence and analysis of chromosome 2 of Dictyostelium discoideum.</title>
        <authorList>
            <person name="Gloeckner G."/>
            <person name="Eichinger L."/>
            <person name="Szafranski K."/>
            <person name="Pachebat J.A."/>
            <person name="Bankier A.T."/>
            <person name="Dear P.H."/>
            <person name="Lehmann R."/>
            <person name="Baumgart C."/>
            <person name="Parra G."/>
            <person name="Abril J.F."/>
            <person name="Guigo R."/>
            <person name="Kumpf K."/>
            <person name="Tunggal B."/>
            <person name="Cox E.C."/>
            <person name="Quail M.A."/>
            <person name="Platzer M."/>
            <person name="Rosenthal A."/>
            <person name="Noegel A.A."/>
        </authorList>
    </citation>
    <scope>NUCLEOTIDE SEQUENCE [LARGE SCALE GENOMIC DNA]</scope>
    <source>
        <strain>AX4</strain>
    </source>
</reference>
<reference key="3">
    <citation type="journal article" date="2005" name="Nature">
        <title>The genome of the social amoeba Dictyostelium discoideum.</title>
        <authorList>
            <person name="Eichinger L."/>
            <person name="Pachebat J.A."/>
            <person name="Gloeckner G."/>
            <person name="Rajandream M.A."/>
            <person name="Sucgang R."/>
            <person name="Berriman M."/>
            <person name="Song J."/>
            <person name="Olsen R."/>
            <person name="Szafranski K."/>
            <person name="Xu Q."/>
            <person name="Tunggal B."/>
            <person name="Kummerfeld S."/>
            <person name="Madera M."/>
            <person name="Konfortov B.A."/>
            <person name="Rivero F."/>
            <person name="Bankier A.T."/>
            <person name="Lehmann R."/>
            <person name="Hamlin N."/>
            <person name="Davies R."/>
            <person name="Gaudet P."/>
            <person name="Fey P."/>
            <person name="Pilcher K."/>
            <person name="Chen G."/>
            <person name="Saunders D."/>
            <person name="Sodergren E.J."/>
            <person name="Davis P."/>
            <person name="Kerhornou A."/>
            <person name="Nie X."/>
            <person name="Hall N."/>
            <person name="Anjard C."/>
            <person name="Hemphill L."/>
            <person name="Bason N."/>
            <person name="Farbrother P."/>
            <person name="Desany B."/>
            <person name="Just E."/>
            <person name="Morio T."/>
            <person name="Rost R."/>
            <person name="Churcher C.M."/>
            <person name="Cooper J."/>
            <person name="Haydock S."/>
            <person name="van Driessche N."/>
            <person name="Cronin A."/>
            <person name="Goodhead I."/>
            <person name="Muzny D.M."/>
            <person name="Mourier T."/>
            <person name="Pain A."/>
            <person name="Lu M."/>
            <person name="Harper D."/>
            <person name="Lindsay R."/>
            <person name="Hauser H."/>
            <person name="James K.D."/>
            <person name="Quiles M."/>
            <person name="Madan Babu M."/>
            <person name="Saito T."/>
            <person name="Buchrieser C."/>
            <person name="Wardroper A."/>
            <person name="Felder M."/>
            <person name="Thangavelu M."/>
            <person name="Johnson D."/>
            <person name="Knights A."/>
            <person name="Loulseged H."/>
            <person name="Mungall K.L."/>
            <person name="Oliver K."/>
            <person name="Price C."/>
            <person name="Quail M.A."/>
            <person name="Urushihara H."/>
            <person name="Hernandez J."/>
            <person name="Rabbinowitsch E."/>
            <person name="Steffen D."/>
            <person name="Sanders M."/>
            <person name="Ma J."/>
            <person name="Kohara Y."/>
            <person name="Sharp S."/>
            <person name="Simmonds M.N."/>
            <person name="Spiegler S."/>
            <person name="Tivey A."/>
            <person name="Sugano S."/>
            <person name="White B."/>
            <person name="Walker D."/>
            <person name="Woodward J.R."/>
            <person name="Winckler T."/>
            <person name="Tanaka Y."/>
            <person name="Shaulsky G."/>
            <person name="Schleicher M."/>
            <person name="Weinstock G.M."/>
            <person name="Rosenthal A."/>
            <person name="Cox E.C."/>
            <person name="Chisholm R.L."/>
            <person name="Gibbs R.A."/>
            <person name="Loomis W.F."/>
            <person name="Platzer M."/>
            <person name="Kay R.R."/>
            <person name="Williams J.G."/>
            <person name="Dear P.H."/>
            <person name="Noegel A.A."/>
            <person name="Barrell B.G."/>
            <person name="Kuspa A."/>
        </authorList>
    </citation>
    <scope>NUCLEOTIDE SEQUENCE [LARGE SCALE GENOMIC DNA]</scope>
    <source>
        <strain>AX4</strain>
    </source>
</reference>
<reference key="4">
    <citation type="journal article" date="1989" name="Nature">
        <title>Myosin I is located at the leading edges of locomoting Dictyostelium amoebae.</title>
        <authorList>
            <person name="Fukui Y."/>
            <person name="Lynch T.J."/>
            <person name="Brzeska H."/>
            <person name="Korn E.D."/>
        </authorList>
    </citation>
    <scope>SUBCELLULAR LOCATION</scope>
</reference>
<reference key="5">
    <citation type="journal article" date="1996" name="Eur. J. Cell Biol.">
        <title>Localization of Dictyostelium myoB and myoD to filopodia and cell-cell contact sites using isoform-specific antibodies.</title>
        <authorList>
            <person name="Morita Y.S."/>
            <person name="Jung G."/>
            <person name="Hammer J.A. III"/>
            <person name="Fukui Y."/>
        </authorList>
    </citation>
    <scope>SUBCELLULAR LOCATION</scope>
    <scope>DEVELOPMENTAL STAGE</scope>
</reference>
<reference key="6">
    <citation type="journal article" date="1996" name="J. Cell Biol.">
        <title>Dictyostelium mutants lacking multiple classic myosin I isoforms reveal combinations of shared and distinct functions.</title>
        <authorList>
            <person name="Jung G."/>
            <person name="Wu X."/>
            <person name="Hammer J.A. III"/>
        </authorList>
    </citation>
    <scope>SUBCELLULAR LOCATION</scope>
    <scope>DISRUPTION PHENOTYPE</scope>
    <scope>FUNCTION</scope>
</reference>
<reference key="7">
    <citation type="journal article" date="2006" name="BMC Genomics">
        <title>Thirteen is enough: the myosins of Dictyostelium discoideum and their light chains.</title>
        <authorList>
            <person name="Kollmar M."/>
        </authorList>
    </citation>
    <scope>NOMENCLATURE</scope>
</reference>
<evidence type="ECO:0000250" key="1"/>
<evidence type="ECO:0000255" key="2">
    <source>
        <dbReference type="PROSITE-ProRule" id="PRU00192"/>
    </source>
</evidence>
<evidence type="ECO:0000255" key="3">
    <source>
        <dbReference type="PROSITE-ProRule" id="PRU00782"/>
    </source>
</evidence>
<evidence type="ECO:0000255" key="4">
    <source>
        <dbReference type="PROSITE-ProRule" id="PRU01093"/>
    </source>
</evidence>
<evidence type="ECO:0000256" key="5">
    <source>
        <dbReference type="SAM" id="MobiDB-lite"/>
    </source>
</evidence>
<evidence type="ECO:0000269" key="6">
    <source>
    </source>
</evidence>
<evidence type="ECO:0000269" key="7">
    <source>
    </source>
</evidence>
<evidence type="ECO:0000305" key="8"/>
<gene>
    <name type="primary">myoD</name>
    <name type="synonym">dmiD</name>
    <name type="ORF">DDB_G0275447</name>
</gene>
<sequence length="1109" mass="124024">MAYKSQHGVDDMVMLSKIANDSILDNLKKRYGGDVIYTYIGNVLISVNPFKQIKNLYSERNLLEYRGKFRYELPPHAYAVADDMYRSMYAEGQSQCVIISGESGAGKTEAAKLIMQYIAAVSGKGADVSRVKDVILESNPLLEAFGNAKTLRNNNSSRFGKYMEVQFNGIGDPEGGRVTNYLLEKSRVVYQTKGERNFHIFYQLLSGANQQLKSELRLDTPDKFNYLSASGCYTVDGVDDSGEFQDVCKAMKVIGLTDSEQKEVFRLVAAILYLGNVGFKNNAKDEAAIDQQSKKALENFAFLMQTDVSSCEKALCFRTISTGTQGRSARVSTYACPQNSEGAYYSRDALAKALYSRLFDWIVGRVNSALGYKQNSQSLMIGILDIYGFEIFEKNGFEQMVINYVNERLQQIFIELTLKTEQEEYFNEGIQWEQIDYFNNKICCDLIESKKPAGILTILDDVCNFPKGDDQKFLDRLKESFSSHAHFQSAAQSSSSFTIKHYAGDVEYCAEGFVDKNKDLLFNDLVELAACTTSKLIPQLFPEINCEKDKRKPTTAGFKIKESIGALVKALSACTPHYIRCIKPNGNKRANDFDTSLVMHQVKYLGLLENVRIRRAGYAYRQTYDKFFYRYRVCCKETWPNWTGGFESGVETILKSMDLEPKQYSKGKTKIFIRAPETVFNLEELRERKVFTYANKLQRFFLRFTLMSYYYSIQKGAADSMKSNKERRRLSIERPYQGDYINYRENFELKDIVKKNGNEKIMFTHAVNKYDRRSRCQRRVLLLSDTAIYFIATEKNKDKEDRKKRPWIYVQKRRLLLAGITSVELSKLSDGFVVLKTMNEHDQIFECRRKTEFLGTLIKAYKTGTLRINYNNSIGVAIKASKQGGKGKERIILFEKGIKPGESVFKGTKVSTPSDGLPADTVPNLTPPESLPVVSIPIYKPAMNAKNAPQNSGGPASNVKPSAKALYDFDAESSMELSFKEGDILTVLDQSSGDWWDAELKGRRGKVPSNYLQLIKNAAPPRAGGPPVPTGNRAPTTTTTSGGSTRGGFNNGPSTAPSGRGAAPPSSRGGMAPRGGSVAPPSSRGGIAPRGGIAPRGGMAPRGGMAPRV</sequence>